<sequence length="1136" mass="127352">MPEAKPAAKKASKGKDAPKEAPAKQTPEEPPKEAPPEDQSPTAEEPTGIFLKKPDSVSVETGKDAVILAKVNGKELPGKPTIKWFKGKWQELGSKSGARFIFKESHDSTSNVYTVELHIGKVVLGDRGDYRLEIKAKDVCDSCSFNVDVEAPRQDSSGQSLESFKRSGDGKSEDAGELDFSGLLKKREVVEEEKKKKKDDDDLGIPPEIWELLKGAKKSEYEKIAFQYGITDLRGMLKRLKKAKVEVKKSAAFTKKLDPAYQVDRGNKIKLVVEISDPDLPLKWFKNGQEIKPSSKYVFENVGKKRILTINKCTLADDAAYEVAVQDEKCFTELFVKEPPVLIVTPLEDQQVFVGDRVEMSVEVSEEGAQVMWMKDGVEMTREDSYKARYRFKKDGKRHILIYSDVAQEDGGRYQVITNGGQCEAELIVEEKQLEVLQDIADLTVKAAEQAVFKCEVSDEKVTGKWYKNGVEVRPSKRITISHVGRFHKLVIDDVRPEDEGDYTFVPDGYALSLSAKLNFLEIKVEYVPKQEPPKIHLDCSGKTSDNSIVVVAGNKLRLDVAITGEPPPTATWLRGDEVFTATEGRTHIEQRPDCSSFVIESAERSDEGRYTIKVTNPVGEDVASIFLRVVDVPDPPEAVRVTSVGEDWAILVWEPPKYDGGQPVTGYLMERKKKGSQRWMKINFEVFTDTTYESTKMIEGVLYEMRVFAVNAIGVSQPSMNTKPFMPIAPTSAPQHLTVEDVTDTTTTLKWRPPDRIGAGGIDGYLVEYCLEGSEEWVPANKEPVERCGFTVKDLPTGARILFRVVGVNIAGRSEPATLLQPVTIREIVEQPKIRLPRHLRQTYIRKVGEALNLVIPFQGKPRPQVVWTKGGAPLDTSRVNVRTSDFDTVFFVRQAARSDSGEYELSVQIENMKDTATIRIRVVEKAGPAENVMVKEVWGTNALVEWQPPKDDGNSEITGYFVQKADKKTMEWFNVYEHNRHTSCTVSDLIVGNEYYFRIFSENICGLSDSPGVSKNTARILKTGITLKPLEYKEHDFRTAPKFLTPLMDRVVVAGYTAALNCAVRGHPKPKVVWMKNKMEIHEDPKFLITNYQGILTLNIRRPSPFDAGTYSCRAFNELGEALAECKLDVRVPQ</sequence>
<evidence type="ECO:0000250" key="1"/>
<evidence type="ECO:0000255" key="2">
    <source>
        <dbReference type="PROSITE-ProRule" id="PRU00316"/>
    </source>
</evidence>
<evidence type="ECO:0000256" key="3">
    <source>
        <dbReference type="SAM" id="MobiDB-lite"/>
    </source>
</evidence>
<evidence type="ECO:0000305" key="4"/>
<evidence type="ECO:0007829" key="5">
    <source>
        <dbReference type="PDB" id="1X5Y"/>
    </source>
</evidence>
<evidence type="ECO:0007829" key="6">
    <source>
        <dbReference type="PDB" id="2DLT"/>
    </source>
</evidence>
<name>MYPC2_MOUSE</name>
<feature type="chain" id="PRO_0000253051" description="Myosin-binding protein C, fast-type">
    <location>
        <begin position="1"/>
        <end position="1136"/>
    </location>
</feature>
<feature type="domain" description="Ig-like C2-type 1">
    <location>
        <begin position="46"/>
        <end position="149"/>
    </location>
</feature>
<feature type="domain" description="Ig-like C2-type 2">
    <location>
        <begin position="250"/>
        <end position="339"/>
    </location>
</feature>
<feature type="domain" description="Ig-like C2-type 3">
    <location>
        <begin position="340"/>
        <end position="432"/>
    </location>
</feature>
<feature type="domain" description="Ig-like C2-type 4">
    <location>
        <begin position="433"/>
        <end position="533"/>
    </location>
</feature>
<feature type="domain" description="Ig-like C2-type 5">
    <location>
        <begin position="534"/>
        <end position="633"/>
    </location>
</feature>
<feature type="domain" description="Fibronectin type-III 1" evidence="2">
    <location>
        <begin position="636"/>
        <end position="732"/>
    </location>
</feature>
<feature type="domain" description="Fibronectin type-III 2" evidence="2">
    <location>
        <begin position="734"/>
        <end position="829"/>
    </location>
</feature>
<feature type="domain" description="Ig-like C2-type 6">
    <location>
        <begin position="833"/>
        <end position="927"/>
    </location>
</feature>
<feature type="domain" description="Fibronectin type-III 3" evidence="2">
    <location>
        <begin position="930"/>
        <end position="1025"/>
    </location>
</feature>
<feature type="domain" description="Ig-like C2-type 7">
    <location>
        <begin position="1043"/>
        <end position="1136"/>
    </location>
</feature>
<feature type="region of interest" description="Disordered" evidence="3">
    <location>
        <begin position="1"/>
        <end position="55"/>
    </location>
</feature>
<feature type="region of interest" description="Disordered" evidence="3">
    <location>
        <begin position="151"/>
        <end position="177"/>
    </location>
</feature>
<feature type="compositionally biased region" description="Basic and acidic residues" evidence="3">
    <location>
        <begin position="13"/>
        <end position="35"/>
    </location>
</feature>
<feature type="compositionally biased region" description="Basic and acidic residues" evidence="3">
    <location>
        <begin position="163"/>
        <end position="174"/>
    </location>
</feature>
<feature type="sequence conflict" description="In Ref. 2; AAH29762." evidence="4" ref="2">
    <original>V</original>
    <variation>A</variation>
    <location>
        <position position="619"/>
    </location>
</feature>
<feature type="sequence conflict" description="In Ref. 1; BAC26371." evidence="4" ref="1">
    <original>D</original>
    <variation>N</variation>
    <location>
        <position position="648"/>
    </location>
</feature>
<feature type="sequence conflict" description="In Ref. 1; BAC26371." evidence="4" ref="1">
    <original>S</original>
    <variation>T</variation>
    <location>
        <position position="900"/>
    </location>
</feature>
<feature type="strand" evidence="6">
    <location>
        <begin position="436"/>
        <end position="438"/>
    </location>
</feature>
<feature type="strand" evidence="6">
    <location>
        <begin position="443"/>
        <end position="448"/>
    </location>
</feature>
<feature type="strand" evidence="6">
    <location>
        <begin position="456"/>
        <end position="458"/>
    </location>
</feature>
<feature type="strand" evidence="6">
    <location>
        <begin position="463"/>
        <end position="470"/>
    </location>
</feature>
<feature type="strand" evidence="6">
    <location>
        <begin position="480"/>
        <end position="484"/>
    </location>
</feature>
<feature type="strand" evidence="6">
    <location>
        <begin position="487"/>
        <end position="494"/>
    </location>
</feature>
<feature type="turn" evidence="6">
    <location>
        <begin position="497"/>
        <end position="499"/>
    </location>
</feature>
<feature type="strand" evidence="6">
    <location>
        <begin position="503"/>
        <end position="508"/>
    </location>
</feature>
<feature type="strand" evidence="6">
    <location>
        <begin position="518"/>
        <end position="521"/>
    </location>
</feature>
<feature type="strand" evidence="5">
    <location>
        <begin position="736"/>
        <end position="743"/>
    </location>
</feature>
<feature type="strand" evidence="5">
    <location>
        <begin position="745"/>
        <end position="753"/>
    </location>
</feature>
<feature type="strand" evidence="5">
    <location>
        <begin position="765"/>
        <end position="772"/>
    </location>
</feature>
<feature type="strand" evidence="5">
    <location>
        <begin position="779"/>
        <end position="784"/>
    </location>
</feature>
<feature type="strand" evidence="5">
    <location>
        <begin position="786"/>
        <end position="794"/>
    </location>
</feature>
<feature type="strand" evidence="5">
    <location>
        <begin position="802"/>
        <end position="810"/>
    </location>
</feature>
<keyword id="KW-0002">3D-structure</keyword>
<keyword id="KW-0009">Actin-binding</keyword>
<keyword id="KW-0130">Cell adhesion</keyword>
<keyword id="KW-0393">Immunoglobulin domain</keyword>
<keyword id="KW-0514">Muscle protein</keyword>
<keyword id="KW-1185">Reference proteome</keyword>
<keyword id="KW-0677">Repeat</keyword>
<keyword id="KW-0787">Thick filament</keyword>
<organism>
    <name type="scientific">Mus musculus</name>
    <name type="common">Mouse</name>
    <dbReference type="NCBI Taxonomy" id="10090"/>
    <lineage>
        <taxon>Eukaryota</taxon>
        <taxon>Metazoa</taxon>
        <taxon>Chordata</taxon>
        <taxon>Craniata</taxon>
        <taxon>Vertebrata</taxon>
        <taxon>Euteleostomi</taxon>
        <taxon>Mammalia</taxon>
        <taxon>Eutheria</taxon>
        <taxon>Euarchontoglires</taxon>
        <taxon>Glires</taxon>
        <taxon>Rodentia</taxon>
        <taxon>Myomorpha</taxon>
        <taxon>Muroidea</taxon>
        <taxon>Muridae</taxon>
        <taxon>Murinae</taxon>
        <taxon>Mus</taxon>
        <taxon>Mus</taxon>
    </lineage>
</organism>
<comment type="function">
    <text evidence="1">Thick filament-associated protein located in the crossbridge region of vertebrate striated muscle a bands. In vitro it binds MHC, F-actin and native thin filaments, and modifies the activity of actin-activated myosin ATPase. It may modulate muscle contraction or may play a more structural role (By similarity).</text>
</comment>
<comment type="similarity">
    <text evidence="4">Belongs to the immunoglobulin superfamily. MyBP family.</text>
</comment>
<accession>Q5XKE0</accession>
<accession>Q8C109</accession>
<accession>Q8K2V0</accession>
<dbReference type="EMBL" id="AK029282">
    <property type="protein sequence ID" value="BAC26371.1"/>
    <property type="molecule type" value="mRNA"/>
</dbReference>
<dbReference type="EMBL" id="BC029762">
    <property type="protein sequence ID" value="AAH29762.1"/>
    <property type="molecule type" value="mRNA"/>
</dbReference>
<dbReference type="EMBL" id="BC039184">
    <property type="protein sequence ID" value="AAH39184.1"/>
    <property type="molecule type" value="mRNA"/>
</dbReference>
<dbReference type="CCDS" id="CCDS52233.1"/>
<dbReference type="RefSeq" id="NP_666301.2">
    <property type="nucleotide sequence ID" value="NM_146189.3"/>
</dbReference>
<dbReference type="PDB" id="1X5Y">
    <property type="method" value="NMR"/>
    <property type="chains" value="A=731-828"/>
</dbReference>
<dbReference type="PDB" id="2DLT">
    <property type="method" value="NMR"/>
    <property type="chains" value="A=433-525"/>
</dbReference>
<dbReference type="PDBsum" id="1X5Y"/>
<dbReference type="PDBsum" id="2DLT"/>
<dbReference type="SMR" id="Q5XKE0"/>
<dbReference type="BioGRID" id="231385">
    <property type="interactions" value="6"/>
</dbReference>
<dbReference type="FunCoup" id="Q5XKE0">
    <property type="interactions" value="95"/>
</dbReference>
<dbReference type="IntAct" id="Q5XKE0">
    <property type="interactions" value="1"/>
</dbReference>
<dbReference type="MINT" id="Q5XKE0"/>
<dbReference type="STRING" id="10090.ENSMUSP00000130127"/>
<dbReference type="CarbonylDB" id="Q5XKE0"/>
<dbReference type="GlyGen" id="Q5XKE0">
    <property type="glycosylation" value="1 site"/>
</dbReference>
<dbReference type="iPTMnet" id="Q5XKE0"/>
<dbReference type="PhosphoSitePlus" id="Q5XKE0"/>
<dbReference type="jPOST" id="Q5XKE0"/>
<dbReference type="PaxDb" id="10090-ENSMUSP00000130127"/>
<dbReference type="PeptideAtlas" id="Q5XKE0"/>
<dbReference type="ProteomicsDB" id="287597"/>
<dbReference type="Antibodypedia" id="32323">
    <property type="antibodies" value="173 antibodies from 32 providers"/>
</dbReference>
<dbReference type="DNASU" id="233199"/>
<dbReference type="Ensembl" id="ENSMUST00000165208.4">
    <property type="protein sequence ID" value="ENSMUSP00000130127.3"/>
    <property type="gene ID" value="ENSMUSG00000038670.12"/>
</dbReference>
<dbReference type="GeneID" id="233199"/>
<dbReference type="KEGG" id="mmu:233199"/>
<dbReference type="UCSC" id="uc009gpv.2">
    <property type="organism name" value="mouse"/>
</dbReference>
<dbReference type="AGR" id="MGI:1336170"/>
<dbReference type="CTD" id="4606"/>
<dbReference type="MGI" id="MGI:1336170">
    <property type="gene designation" value="Mybpc2"/>
</dbReference>
<dbReference type="VEuPathDB" id="HostDB:ENSMUSG00000038670"/>
<dbReference type="eggNOG" id="ENOG502QW17">
    <property type="taxonomic scope" value="Eukaryota"/>
</dbReference>
<dbReference type="GeneTree" id="ENSGT00940000160092"/>
<dbReference type="HOGENOM" id="CLU_006405_1_1_1"/>
<dbReference type="InParanoid" id="Q5XKE0"/>
<dbReference type="OMA" id="YEHSRHT"/>
<dbReference type="OrthoDB" id="6107607at2759"/>
<dbReference type="PhylomeDB" id="Q5XKE0"/>
<dbReference type="TreeFam" id="TF351819"/>
<dbReference type="Reactome" id="R-MMU-390522">
    <property type="pathway name" value="Striated Muscle Contraction"/>
</dbReference>
<dbReference type="BioGRID-ORCS" id="233199">
    <property type="hits" value="3 hits in 79 CRISPR screens"/>
</dbReference>
<dbReference type="ChiTaRS" id="Mybpc2">
    <property type="organism name" value="mouse"/>
</dbReference>
<dbReference type="EvolutionaryTrace" id="Q5XKE0"/>
<dbReference type="PRO" id="PR:Q5XKE0"/>
<dbReference type="Proteomes" id="UP000000589">
    <property type="component" value="Chromosome 7"/>
</dbReference>
<dbReference type="RNAct" id="Q5XKE0">
    <property type="molecule type" value="protein"/>
</dbReference>
<dbReference type="Bgee" id="ENSMUSG00000038670">
    <property type="expression patterns" value="Expressed in triceps brachii and 74 other cell types or tissues"/>
</dbReference>
<dbReference type="ExpressionAtlas" id="Q5XKE0">
    <property type="expression patterns" value="baseline and differential"/>
</dbReference>
<dbReference type="GO" id="GO:0005856">
    <property type="term" value="C:cytoskeleton"/>
    <property type="evidence" value="ECO:0000304"/>
    <property type="project" value="MGI"/>
</dbReference>
<dbReference type="GO" id="GO:0032982">
    <property type="term" value="C:myosin filament"/>
    <property type="evidence" value="ECO:0007669"/>
    <property type="project" value="UniProtKB-KW"/>
</dbReference>
<dbReference type="GO" id="GO:0003779">
    <property type="term" value="F:actin binding"/>
    <property type="evidence" value="ECO:0007669"/>
    <property type="project" value="UniProtKB-KW"/>
</dbReference>
<dbReference type="GO" id="GO:0005200">
    <property type="term" value="F:structural constituent of cytoskeleton"/>
    <property type="evidence" value="ECO:0000304"/>
    <property type="project" value="MGI"/>
</dbReference>
<dbReference type="GO" id="GO:0007155">
    <property type="term" value="P:cell adhesion"/>
    <property type="evidence" value="ECO:0007669"/>
    <property type="project" value="UniProtKB-KW"/>
</dbReference>
<dbReference type="GO" id="GO:0006936">
    <property type="term" value="P:muscle contraction"/>
    <property type="evidence" value="ECO:0000304"/>
    <property type="project" value="MGI"/>
</dbReference>
<dbReference type="CDD" id="cd00063">
    <property type="entry name" value="FN3"/>
    <property type="match status" value="3"/>
</dbReference>
<dbReference type="CDD" id="cd00096">
    <property type="entry name" value="Ig"/>
    <property type="match status" value="1"/>
</dbReference>
<dbReference type="CDD" id="cd05894">
    <property type="entry name" value="Ig_C5_MyBP-C"/>
    <property type="match status" value="1"/>
</dbReference>
<dbReference type="CDD" id="cd05748">
    <property type="entry name" value="Ig_Titin_like"/>
    <property type="match status" value="1"/>
</dbReference>
<dbReference type="FunFam" id="2.60.40.10:FF:000646">
    <property type="entry name" value="Myosin binding protein C, fast type"/>
    <property type="match status" value="1"/>
</dbReference>
<dbReference type="FunFam" id="2.60.40.10:FF:001216">
    <property type="entry name" value="Myosin binding protein C, fast type"/>
    <property type="match status" value="1"/>
</dbReference>
<dbReference type="FunFam" id="2.60.40.10:FF:000225">
    <property type="entry name" value="Myosin-binding protein C, cardiac-type"/>
    <property type="match status" value="1"/>
</dbReference>
<dbReference type="FunFam" id="2.60.40.10:FF:000326">
    <property type="entry name" value="Myosin-binding protein C, cardiac-type"/>
    <property type="match status" value="1"/>
</dbReference>
<dbReference type="FunFam" id="2.60.40.10:FF:000031">
    <property type="entry name" value="Myosin-binding protein C, slow type"/>
    <property type="match status" value="1"/>
</dbReference>
<dbReference type="FunFam" id="2.60.40.10:FF:000060">
    <property type="entry name" value="Myosin-binding protein C, slow type"/>
    <property type="match status" value="1"/>
</dbReference>
<dbReference type="FunFam" id="2.60.40.10:FF:000062">
    <property type="entry name" value="Myosin-binding protein C, slow type"/>
    <property type="match status" value="1"/>
</dbReference>
<dbReference type="FunFam" id="2.60.40.10:FF:000070">
    <property type="entry name" value="Myosin-binding protein C, slow type"/>
    <property type="match status" value="1"/>
</dbReference>
<dbReference type="FunFam" id="2.60.40.10:FF:000081">
    <property type="entry name" value="Myosin-binding protein C, slow type"/>
    <property type="match status" value="1"/>
</dbReference>
<dbReference type="FunFam" id="2.60.40.10:FF:000085">
    <property type="entry name" value="Myosin-binding protein C, slow type"/>
    <property type="match status" value="1"/>
</dbReference>
<dbReference type="Gene3D" id="2.60.40.10">
    <property type="entry name" value="Immunoglobulins"/>
    <property type="match status" value="10"/>
</dbReference>
<dbReference type="InterPro" id="IPR003961">
    <property type="entry name" value="FN3_dom"/>
</dbReference>
<dbReference type="InterPro" id="IPR036116">
    <property type="entry name" value="FN3_sf"/>
</dbReference>
<dbReference type="InterPro" id="IPR007110">
    <property type="entry name" value="Ig-like_dom"/>
</dbReference>
<dbReference type="InterPro" id="IPR036179">
    <property type="entry name" value="Ig-like_dom_sf"/>
</dbReference>
<dbReference type="InterPro" id="IPR013783">
    <property type="entry name" value="Ig-like_fold"/>
</dbReference>
<dbReference type="InterPro" id="IPR013098">
    <property type="entry name" value="Ig_I-set"/>
</dbReference>
<dbReference type="InterPro" id="IPR003599">
    <property type="entry name" value="Ig_sub"/>
</dbReference>
<dbReference type="InterPro" id="IPR003598">
    <property type="entry name" value="Ig_sub2"/>
</dbReference>
<dbReference type="InterPro" id="IPR040849">
    <property type="entry name" value="MyBP-C_THB"/>
</dbReference>
<dbReference type="InterPro" id="IPR050964">
    <property type="entry name" value="Striated_Muscle_Regulatory"/>
</dbReference>
<dbReference type="PANTHER" id="PTHR13817:SF17">
    <property type="entry name" value="MYOSIN-BINDING PROTEIN C, FAST-TYPE"/>
    <property type="match status" value="1"/>
</dbReference>
<dbReference type="PANTHER" id="PTHR13817">
    <property type="entry name" value="TITIN"/>
    <property type="match status" value="1"/>
</dbReference>
<dbReference type="Pfam" id="PF00041">
    <property type="entry name" value="fn3"/>
    <property type="match status" value="3"/>
</dbReference>
<dbReference type="Pfam" id="PF07679">
    <property type="entry name" value="I-set"/>
    <property type="match status" value="7"/>
</dbReference>
<dbReference type="Pfam" id="PF18362">
    <property type="entry name" value="THB"/>
    <property type="match status" value="1"/>
</dbReference>
<dbReference type="PRINTS" id="PR00014">
    <property type="entry name" value="FNTYPEIII"/>
</dbReference>
<dbReference type="SMART" id="SM00060">
    <property type="entry name" value="FN3"/>
    <property type="match status" value="3"/>
</dbReference>
<dbReference type="SMART" id="SM00409">
    <property type="entry name" value="IG"/>
    <property type="match status" value="7"/>
</dbReference>
<dbReference type="SMART" id="SM00408">
    <property type="entry name" value="IGc2"/>
    <property type="match status" value="3"/>
</dbReference>
<dbReference type="SUPFAM" id="SSF49265">
    <property type="entry name" value="Fibronectin type III"/>
    <property type="match status" value="2"/>
</dbReference>
<dbReference type="SUPFAM" id="SSF48726">
    <property type="entry name" value="Immunoglobulin"/>
    <property type="match status" value="7"/>
</dbReference>
<dbReference type="PROSITE" id="PS50853">
    <property type="entry name" value="FN3"/>
    <property type="match status" value="3"/>
</dbReference>
<dbReference type="PROSITE" id="PS50835">
    <property type="entry name" value="IG_LIKE"/>
    <property type="match status" value="5"/>
</dbReference>
<proteinExistence type="evidence at protein level"/>
<gene>
    <name type="primary">Mybpc2</name>
</gene>
<reference key="1">
    <citation type="journal article" date="2005" name="Science">
        <title>The transcriptional landscape of the mammalian genome.</title>
        <authorList>
            <person name="Carninci P."/>
            <person name="Kasukawa T."/>
            <person name="Katayama S."/>
            <person name="Gough J."/>
            <person name="Frith M.C."/>
            <person name="Maeda N."/>
            <person name="Oyama R."/>
            <person name="Ravasi T."/>
            <person name="Lenhard B."/>
            <person name="Wells C."/>
            <person name="Kodzius R."/>
            <person name="Shimokawa K."/>
            <person name="Bajic V.B."/>
            <person name="Brenner S.E."/>
            <person name="Batalov S."/>
            <person name="Forrest A.R."/>
            <person name="Zavolan M."/>
            <person name="Davis M.J."/>
            <person name="Wilming L.G."/>
            <person name="Aidinis V."/>
            <person name="Allen J.E."/>
            <person name="Ambesi-Impiombato A."/>
            <person name="Apweiler R."/>
            <person name="Aturaliya R.N."/>
            <person name="Bailey T.L."/>
            <person name="Bansal M."/>
            <person name="Baxter L."/>
            <person name="Beisel K.W."/>
            <person name="Bersano T."/>
            <person name="Bono H."/>
            <person name="Chalk A.M."/>
            <person name="Chiu K.P."/>
            <person name="Choudhary V."/>
            <person name="Christoffels A."/>
            <person name="Clutterbuck D.R."/>
            <person name="Crowe M.L."/>
            <person name="Dalla E."/>
            <person name="Dalrymple B.P."/>
            <person name="de Bono B."/>
            <person name="Della Gatta G."/>
            <person name="di Bernardo D."/>
            <person name="Down T."/>
            <person name="Engstrom P."/>
            <person name="Fagiolini M."/>
            <person name="Faulkner G."/>
            <person name="Fletcher C.F."/>
            <person name="Fukushima T."/>
            <person name="Furuno M."/>
            <person name="Futaki S."/>
            <person name="Gariboldi M."/>
            <person name="Georgii-Hemming P."/>
            <person name="Gingeras T.R."/>
            <person name="Gojobori T."/>
            <person name="Green R.E."/>
            <person name="Gustincich S."/>
            <person name="Harbers M."/>
            <person name="Hayashi Y."/>
            <person name="Hensch T.K."/>
            <person name="Hirokawa N."/>
            <person name="Hill D."/>
            <person name="Huminiecki L."/>
            <person name="Iacono M."/>
            <person name="Ikeo K."/>
            <person name="Iwama A."/>
            <person name="Ishikawa T."/>
            <person name="Jakt M."/>
            <person name="Kanapin A."/>
            <person name="Katoh M."/>
            <person name="Kawasawa Y."/>
            <person name="Kelso J."/>
            <person name="Kitamura H."/>
            <person name="Kitano H."/>
            <person name="Kollias G."/>
            <person name="Krishnan S.P."/>
            <person name="Kruger A."/>
            <person name="Kummerfeld S.K."/>
            <person name="Kurochkin I.V."/>
            <person name="Lareau L.F."/>
            <person name="Lazarevic D."/>
            <person name="Lipovich L."/>
            <person name="Liu J."/>
            <person name="Liuni S."/>
            <person name="McWilliam S."/>
            <person name="Madan Babu M."/>
            <person name="Madera M."/>
            <person name="Marchionni L."/>
            <person name="Matsuda H."/>
            <person name="Matsuzawa S."/>
            <person name="Miki H."/>
            <person name="Mignone F."/>
            <person name="Miyake S."/>
            <person name="Morris K."/>
            <person name="Mottagui-Tabar S."/>
            <person name="Mulder N."/>
            <person name="Nakano N."/>
            <person name="Nakauchi H."/>
            <person name="Ng P."/>
            <person name="Nilsson R."/>
            <person name="Nishiguchi S."/>
            <person name="Nishikawa S."/>
            <person name="Nori F."/>
            <person name="Ohara O."/>
            <person name="Okazaki Y."/>
            <person name="Orlando V."/>
            <person name="Pang K.C."/>
            <person name="Pavan W.J."/>
            <person name="Pavesi G."/>
            <person name="Pesole G."/>
            <person name="Petrovsky N."/>
            <person name="Piazza S."/>
            <person name="Reed J."/>
            <person name="Reid J.F."/>
            <person name="Ring B.Z."/>
            <person name="Ringwald M."/>
            <person name="Rost B."/>
            <person name="Ruan Y."/>
            <person name="Salzberg S.L."/>
            <person name="Sandelin A."/>
            <person name="Schneider C."/>
            <person name="Schoenbach C."/>
            <person name="Sekiguchi K."/>
            <person name="Semple C.A."/>
            <person name="Seno S."/>
            <person name="Sessa L."/>
            <person name="Sheng Y."/>
            <person name="Shibata Y."/>
            <person name="Shimada H."/>
            <person name="Shimada K."/>
            <person name="Silva D."/>
            <person name="Sinclair B."/>
            <person name="Sperling S."/>
            <person name="Stupka E."/>
            <person name="Sugiura K."/>
            <person name="Sultana R."/>
            <person name="Takenaka Y."/>
            <person name="Taki K."/>
            <person name="Tammoja K."/>
            <person name="Tan S.L."/>
            <person name="Tang S."/>
            <person name="Taylor M.S."/>
            <person name="Tegner J."/>
            <person name="Teichmann S.A."/>
            <person name="Ueda H.R."/>
            <person name="van Nimwegen E."/>
            <person name="Verardo R."/>
            <person name="Wei C.L."/>
            <person name="Yagi K."/>
            <person name="Yamanishi H."/>
            <person name="Zabarovsky E."/>
            <person name="Zhu S."/>
            <person name="Zimmer A."/>
            <person name="Hide W."/>
            <person name="Bult C."/>
            <person name="Grimmond S.M."/>
            <person name="Teasdale R.D."/>
            <person name="Liu E.T."/>
            <person name="Brusic V."/>
            <person name="Quackenbush J."/>
            <person name="Wahlestedt C."/>
            <person name="Mattick J.S."/>
            <person name="Hume D.A."/>
            <person name="Kai C."/>
            <person name="Sasaki D."/>
            <person name="Tomaru Y."/>
            <person name="Fukuda S."/>
            <person name="Kanamori-Katayama M."/>
            <person name="Suzuki M."/>
            <person name="Aoki J."/>
            <person name="Arakawa T."/>
            <person name="Iida J."/>
            <person name="Imamura K."/>
            <person name="Itoh M."/>
            <person name="Kato T."/>
            <person name="Kawaji H."/>
            <person name="Kawagashira N."/>
            <person name="Kawashima T."/>
            <person name="Kojima M."/>
            <person name="Kondo S."/>
            <person name="Konno H."/>
            <person name="Nakano K."/>
            <person name="Ninomiya N."/>
            <person name="Nishio T."/>
            <person name="Okada M."/>
            <person name="Plessy C."/>
            <person name="Shibata K."/>
            <person name="Shiraki T."/>
            <person name="Suzuki S."/>
            <person name="Tagami M."/>
            <person name="Waki K."/>
            <person name="Watahiki A."/>
            <person name="Okamura-Oho Y."/>
            <person name="Suzuki H."/>
            <person name="Kawai J."/>
            <person name="Hayashizaki Y."/>
        </authorList>
    </citation>
    <scope>NUCLEOTIDE SEQUENCE [LARGE SCALE MRNA]</scope>
    <source>
        <strain>C57BL/6J</strain>
        <tissue>Head</tissue>
    </source>
</reference>
<reference key="2">
    <citation type="journal article" date="2004" name="Genome Res.">
        <title>The status, quality, and expansion of the NIH full-length cDNA project: the Mammalian Gene Collection (MGC).</title>
        <authorList>
            <consortium name="The MGC Project Team"/>
        </authorList>
    </citation>
    <scope>NUCLEOTIDE SEQUENCE [LARGE SCALE MRNA]</scope>
    <source>
        <strain>Czech II</strain>
        <strain>FVB/N</strain>
        <tissue>Mammary gland</tissue>
        <tissue>Mammary tumor</tissue>
    </source>
</reference>
<reference key="3">
    <citation type="journal article" date="2010" name="Cell">
        <title>A tissue-specific atlas of mouse protein phosphorylation and expression.</title>
        <authorList>
            <person name="Huttlin E.L."/>
            <person name="Jedrychowski M.P."/>
            <person name="Elias J.E."/>
            <person name="Goswami T."/>
            <person name="Rad R."/>
            <person name="Beausoleil S.A."/>
            <person name="Villen J."/>
            <person name="Haas W."/>
            <person name="Sowa M.E."/>
            <person name="Gygi S.P."/>
        </authorList>
    </citation>
    <scope>IDENTIFICATION BY MASS SPECTROMETRY [LARGE SCALE ANALYSIS]</scope>
    <source>
        <tissue>Brown adipose tissue</tissue>
        <tissue>Heart</tissue>
    </source>
</reference>
<reference key="4">
    <citation type="submission" date="2006-01" db="PDB data bank">
        <title>Solution structure of the fibronectin type-III domain of mouse myosin-binding protein C, fast-type homolog.</title>
        <authorList>
            <consortium name="RIKEN structural genomics initiative (RSGI)"/>
        </authorList>
    </citation>
    <scope>STRUCTURE BY NMR OF 731-828</scope>
</reference>
<protein>
    <recommendedName>
        <fullName>Myosin-binding protein C, fast-type</fullName>
        <shortName>Fast MyBP-C</shortName>
    </recommendedName>
    <alternativeName>
        <fullName>C-protein, skeletal muscle fast isoform</fullName>
    </alternativeName>
</protein>